<accession>B7LA67</accession>
<proteinExistence type="inferred from homology"/>
<protein>
    <recommendedName>
        <fullName evidence="1">tRNA/tmRNA (uracil-C(5))-methyltransferase</fullName>
        <ecNumber evidence="1">2.1.1.-</ecNumber>
        <ecNumber evidence="1">2.1.1.35</ecNumber>
    </recommendedName>
    <alternativeName>
        <fullName evidence="1">tRNA (uracil(54)-C(5))-methyltransferase</fullName>
    </alternativeName>
    <alternativeName>
        <fullName evidence="1">tRNA(m5U54)-methyltransferase</fullName>
        <shortName evidence="1">RUMT</shortName>
    </alternativeName>
    <alternativeName>
        <fullName evidence="1">tmRNA (uracil(341)-C(5))-methyltransferase</fullName>
    </alternativeName>
</protein>
<evidence type="ECO:0000255" key="1">
    <source>
        <dbReference type="HAMAP-Rule" id="MF_01011"/>
    </source>
</evidence>
<dbReference type="EC" id="2.1.1.-" evidence="1"/>
<dbReference type="EC" id="2.1.1.35" evidence="1"/>
<dbReference type="EMBL" id="CU928145">
    <property type="protein sequence ID" value="CAV01205.1"/>
    <property type="molecule type" value="Genomic_DNA"/>
</dbReference>
<dbReference type="RefSeq" id="WP_000187022.1">
    <property type="nucleotide sequence ID" value="NC_011748.1"/>
</dbReference>
<dbReference type="SMR" id="B7LA67"/>
<dbReference type="GeneID" id="75203203"/>
<dbReference type="KEGG" id="eck:EC55989_4450"/>
<dbReference type="HOGENOM" id="CLU_043022_0_0_6"/>
<dbReference type="Proteomes" id="UP000000746">
    <property type="component" value="Chromosome"/>
</dbReference>
<dbReference type="GO" id="GO:0005829">
    <property type="term" value="C:cytosol"/>
    <property type="evidence" value="ECO:0007669"/>
    <property type="project" value="TreeGrafter"/>
</dbReference>
<dbReference type="GO" id="GO:0019843">
    <property type="term" value="F:rRNA binding"/>
    <property type="evidence" value="ECO:0007669"/>
    <property type="project" value="TreeGrafter"/>
</dbReference>
<dbReference type="GO" id="GO:0030697">
    <property type="term" value="F:tRNA (uracil(54)-C5)-methyltransferase activity, S-adenosyl methionine-dependent"/>
    <property type="evidence" value="ECO:0007669"/>
    <property type="project" value="UniProtKB-UniRule"/>
</dbReference>
<dbReference type="GO" id="GO:0000049">
    <property type="term" value="F:tRNA binding"/>
    <property type="evidence" value="ECO:0007669"/>
    <property type="project" value="TreeGrafter"/>
</dbReference>
<dbReference type="GO" id="GO:0030488">
    <property type="term" value="P:tRNA methylation"/>
    <property type="evidence" value="ECO:0007669"/>
    <property type="project" value="UniProtKB-UniRule"/>
</dbReference>
<dbReference type="CDD" id="cd02440">
    <property type="entry name" value="AdoMet_MTases"/>
    <property type="match status" value="1"/>
</dbReference>
<dbReference type="FunFam" id="2.40.50.1070:FF:000001">
    <property type="entry name" value="tRNA/tmRNA (uracil-C(5))-methyltransferase"/>
    <property type="match status" value="1"/>
</dbReference>
<dbReference type="FunFam" id="3.40.50.150:FF:000012">
    <property type="entry name" value="tRNA/tmRNA (uracil-C(5))-methyltransferase"/>
    <property type="match status" value="1"/>
</dbReference>
<dbReference type="Gene3D" id="2.40.50.1070">
    <property type="match status" value="1"/>
</dbReference>
<dbReference type="Gene3D" id="3.40.50.150">
    <property type="entry name" value="Vaccinia Virus protein VP39"/>
    <property type="match status" value="1"/>
</dbReference>
<dbReference type="HAMAP" id="MF_01011">
    <property type="entry name" value="RNA_methyltr_TrmA"/>
    <property type="match status" value="1"/>
</dbReference>
<dbReference type="InterPro" id="IPR030390">
    <property type="entry name" value="MeTrfase_TrmA_AS"/>
</dbReference>
<dbReference type="InterPro" id="IPR030391">
    <property type="entry name" value="MeTrfase_TrmA_CS"/>
</dbReference>
<dbReference type="InterPro" id="IPR029063">
    <property type="entry name" value="SAM-dependent_MTases_sf"/>
</dbReference>
<dbReference type="InterPro" id="IPR011869">
    <property type="entry name" value="TrmA_MeTrfase"/>
</dbReference>
<dbReference type="InterPro" id="IPR010280">
    <property type="entry name" value="U5_MeTrfase_fam"/>
</dbReference>
<dbReference type="NCBIfam" id="TIGR02143">
    <property type="entry name" value="trmA_only"/>
    <property type="match status" value="1"/>
</dbReference>
<dbReference type="PANTHER" id="PTHR47790">
    <property type="entry name" value="TRNA/TMRNA (URACIL-C(5))-METHYLTRANSFERASE"/>
    <property type="match status" value="1"/>
</dbReference>
<dbReference type="PANTHER" id="PTHR47790:SF2">
    <property type="entry name" value="TRNA_TMRNA (URACIL-C(5))-METHYLTRANSFERASE"/>
    <property type="match status" value="1"/>
</dbReference>
<dbReference type="Pfam" id="PF05958">
    <property type="entry name" value="tRNA_U5-meth_tr"/>
    <property type="match status" value="1"/>
</dbReference>
<dbReference type="SUPFAM" id="SSF53335">
    <property type="entry name" value="S-adenosyl-L-methionine-dependent methyltransferases"/>
    <property type="match status" value="1"/>
</dbReference>
<dbReference type="PROSITE" id="PS51687">
    <property type="entry name" value="SAM_MT_RNA_M5U"/>
    <property type="match status" value="1"/>
</dbReference>
<dbReference type="PROSITE" id="PS01230">
    <property type="entry name" value="TRMA_1"/>
    <property type="match status" value="1"/>
</dbReference>
<dbReference type="PROSITE" id="PS01231">
    <property type="entry name" value="TRMA_2"/>
    <property type="match status" value="1"/>
</dbReference>
<sequence>MTPEHLPTEQYEAQLAEKVVRLQSMMAPFSDLVPEVFRSPVSHYRMRAEFRIWHDGDDLYHIIFDQQTKSRIRVDSFPAASELINQLMTAMIAGVRNNPVLRHKLFQIDYLTTLSNQAVVSLLYHKKLDDEWRQEAEALRDALRAQNLNVHLIGRATKTKIELDQDYIDERLPVAGKEMIYRQVENSFTQPNAAMNIQMLEWALDVTKGSKGDLLELYCGNGNFSLALARNFDRVLATEIAKPSVAAAQYNIAANHIDNVQIIRMAAEEFTQAMNGVREFNRLQGIDLKSYQCETIFVDPPRSGLDSETEKMVQAYPRILYISCNPETLCKNLETLSQTHKVERLALFDQFPYTHHMECGVLLTAK</sequence>
<comment type="function">
    <text evidence="1">Dual-specificity methyltransferase that catalyzes the formation of 5-methyluridine at position 54 (m5U54) in all tRNAs, and that of position 341 (m5U341) in tmRNA (transfer-mRNA).</text>
</comment>
<comment type="catalytic activity">
    <reaction evidence="1">
        <text>uridine(54) in tRNA + S-adenosyl-L-methionine = 5-methyluridine(54) in tRNA + S-adenosyl-L-homocysteine + H(+)</text>
        <dbReference type="Rhea" id="RHEA:42712"/>
        <dbReference type="Rhea" id="RHEA-COMP:10167"/>
        <dbReference type="Rhea" id="RHEA-COMP:10193"/>
        <dbReference type="ChEBI" id="CHEBI:15378"/>
        <dbReference type="ChEBI" id="CHEBI:57856"/>
        <dbReference type="ChEBI" id="CHEBI:59789"/>
        <dbReference type="ChEBI" id="CHEBI:65315"/>
        <dbReference type="ChEBI" id="CHEBI:74447"/>
        <dbReference type="EC" id="2.1.1.35"/>
    </reaction>
</comment>
<comment type="catalytic activity">
    <reaction evidence="1">
        <text>uridine(341) in tmRNA + S-adenosyl-L-methionine = 5-methyluridine(341) in tmRNA + S-adenosyl-L-homocysteine + H(+)</text>
        <dbReference type="Rhea" id="RHEA:43612"/>
        <dbReference type="Rhea" id="RHEA-COMP:10630"/>
        <dbReference type="Rhea" id="RHEA-COMP:10631"/>
        <dbReference type="ChEBI" id="CHEBI:15378"/>
        <dbReference type="ChEBI" id="CHEBI:57856"/>
        <dbReference type="ChEBI" id="CHEBI:59789"/>
        <dbReference type="ChEBI" id="CHEBI:65315"/>
        <dbReference type="ChEBI" id="CHEBI:74447"/>
    </reaction>
</comment>
<comment type="similarity">
    <text evidence="1">Belongs to the class I-like SAM-binding methyltransferase superfamily. RNA M5U methyltransferase family. TrmA subfamily.</text>
</comment>
<feature type="chain" id="PRO_1000148886" description="tRNA/tmRNA (uracil-C(5))-methyltransferase">
    <location>
        <begin position="1"/>
        <end position="366"/>
    </location>
</feature>
<feature type="active site" description="Nucleophile" evidence="1">
    <location>
        <position position="324"/>
    </location>
</feature>
<feature type="active site" description="Proton acceptor" evidence="1">
    <location>
        <position position="358"/>
    </location>
</feature>
<feature type="binding site" evidence="1">
    <location>
        <position position="190"/>
    </location>
    <ligand>
        <name>S-adenosyl-L-methionine</name>
        <dbReference type="ChEBI" id="CHEBI:59789"/>
    </ligand>
</feature>
<feature type="binding site" evidence="1">
    <location>
        <position position="218"/>
    </location>
    <ligand>
        <name>S-adenosyl-L-methionine</name>
        <dbReference type="ChEBI" id="CHEBI:59789"/>
    </ligand>
</feature>
<feature type="binding site" evidence="1">
    <location>
        <position position="223"/>
    </location>
    <ligand>
        <name>S-adenosyl-L-methionine</name>
        <dbReference type="ChEBI" id="CHEBI:59789"/>
    </ligand>
</feature>
<feature type="binding site" evidence="1">
    <location>
        <position position="239"/>
    </location>
    <ligand>
        <name>S-adenosyl-L-methionine</name>
        <dbReference type="ChEBI" id="CHEBI:59789"/>
    </ligand>
</feature>
<feature type="binding site" evidence="1">
    <location>
        <position position="299"/>
    </location>
    <ligand>
        <name>S-adenosyl-L-methionine</name>
        <dbReference type="ChEBI" id="CHEBI:59789"/>
    </ligand>
</feature>
<keyword id="KW-0489">Methyltransferase</keyword>
<keyword id="KW-1185">Reference proteome</keyword>
<keyword id="KW-0949">S-adenosyl-L-methionine</keyword>
<keyword id="KW-0808">Transferase</keyword>
<keyword id="KW-0819">tRNA processing</keyword>
<name>TRMA_ECO55</name>
<gene>
    <name evidence="1" type="primary">trmA</name>
    <name type="ordered locus">EC55989_4450</name>
</gene>
<organism>
    <name type="scientific">Escherichia coli (strain 55989 / EAEC)</name>
    <dbReference type="NCBI Taxonomy" id="585055"/>
    <lineage>
        <taxon>Bacteria</taxon>
        <taxon>Pseudomonadati</taxon>
        <taxon>Pseudomonadota</taxon>
        <taxon>Gammaproteobacteria</taxon>
        <taxon>Enterobacterales</taxon>
        <taxon>Enterobacteriaceae</taxon>
        <taxon>Escherichia</taxon>
    </lineage>
</organism>
<reference key="1">
    <citation type="journal article" date="2009" name="PLoS Genet.">
        <title>Organised genome dynamics in the Escherichia coli species results in highly diverse adaptive paths.</title>
        <authorList>
            <person name="Touchon M."/>
            <person name="Hoede C."/>
            <person name="Tenaillon O."/>
            <person name="Barbe V."/>
            <person name="Baeriswyl S."/>
            <person name="Bidet P."/>
            <person name="Bingen E."/>
            <person name="Bonacorsi S."/>
            <person name="Bouchier C."/>
            <person name="Bouvet O."/>
            <person name="Calteau A."/>
            <person name="Chiapello H."/>
            <person name="Clermont O."/>
            <person name="Cruveiller S."/>
            <person name="Danchin A."/>
            <person name="Diard M."/>
            <person name="Dossat C."/>
            <person name="Karoui M.E."/>
            <person name="Frapy E."/>
            <person name="Garry L."/>
            <person name="Ghigo J.M."/>
            <person name="Gilles A.M."/>
            <person name="Johnson J."/>
            <person name="Le Bouguenec C."/>
            <person name="Lescat M."/>
            <person name="Mangenot S."/>
            <person name="Martinez-Jehanne V."/>
            <person name="Matic I."/>
            <person name="Nassif X."/>
            <person name="Oztas S."/>
            <person name="Petit M.A."/>
            <person name="Pichon C."/>
            <person name="Rouy Z."/>
            <person name="Ruf C.S."/>
            <person name="Schneider D."/>
            <person name="Tourret J."/>
            <person name="Vacherie B."/>
            <person name="Vallenet D."/>
            <person name="Medigue C."/>
            <person name="Rocha E.P.C."/>
            <person name="Denamur E."/>
        </authorList>
    </citation>
    <scope>NUCLEOTIDE SEQUENCE [LARGE SCALE GENOMIC DNA]</scope>
    <source>
        <strain>55989 / EAEC</strain>
    </source>
</reference>